<reference key="1">
    <citation type="journal article" date="2002" name="DNA Res.">
        <title>Complete genomic sequence of nitrogen-fixing symbiotic bacterium Bradyrhizobium japonicum USDA110.</title>
        <authorList>
            <person name="Kaneko T."/>
            <person name="Nakamura Y."/>
            <person name="Sato S."/>
            <person name="Minamisawa K."/>
            <person name="Uchiumi T."/>
            <person name="Sasamoto S."/>
            <person name="Watanabe A."/>
            <person name="Idesawa K."/>
            <person name="Iriguchi M."/>
            <person name="Kawashima K."/>
            <person name="Kohara M."/>
            <person name="Matsumoto M."/>
            <person name="Shimpo S."/>
            <person name="Tsuruoka H."/>
            <person name="Wada T."/>
            <person name="Yamada M."/>
            <person name="Tabata S."/>
        </authorList>
    </citation>
    <scope>NUCLEOTIDE SEQUENCE [LARGE SCALE GENOMIC DNA]</scope>
    <source>
        <strain>JCM 10833 / BCRC 13528 / IAM 13628 / NBRC 14792 / USDA 110</strain>
    </source>
</reference>
<evidence type="ECO:0000255" key="1">
    <source>
        <dbReference type="HAMAP-Rule" id="MF_00420"/>
    </source>
</evidence>
<comment type="function">
    <text evidence="1">Part of the phosphoribosylformylglycinamidine synthase complex involved in the purines biosynthetic pathway. Catalyzes the ATP-dependent conversion of formylglycinamide ribonucleotide (FGAR) and glutamine to yield formylglycinamidine ribonucleotide (FGAM) and glutamate. The FGAM synthase complex is composed of three subunits. PurQ produces an ammonia molecule by converting glutamine to glutamate. PurL transfers the ammonia molecule to FGAR to form FGAM in an ATP-dependent manner. PurS interacts with PurQ and PurL and is thought to assist in the transfer of the ammonia molecule from PurQ to PurL.</text>
</comment>
<comment type="catalytic activity">
    <reaction evidence="1">
        <text>N(2)-formyl-N(1)-(5-phospho-beta-D-ribosyl)glycinamide + L-glutamine + ATP + H2O = 2-formamido-N(1)-(5-O-phospho-beta-D-ribosyl)acetamidine + L-glutamate + ADP + phosphate + H(+)</text>
        <dbReference type="Rhea" id="RHEA:17129"/>
        <dbReference type="ChEBI" id="CHEBI:15377"/>
        <dbReference type="ChEBI" id="CHEBI:15378"/>
        <dbReference type="ChEBI" id="CHEBI:29985"/>
        <dbReference type="ChEBI" id="CHEBI:30616"/>
        <dbReference type="ChEBI" id="CHEBI:43474"/>
        <dbReference type="ChEBI" id="CHEBI:58359"/>
        <dbReference type="ChEBI" id="CHEBI:147286"/>
        <dbReference type="ChEBI" id="CHEBI:147287"/>
        <dbReference type="ChEBI" id="CHEBI:456216"/>
        <dbReference type="EC" id="6.3.5.3"/>
    </reaction>
</comment>
<comment type="pathway">
    <text evidence="1">Purine metabolism; IMP biosynthesis via de novo pathway; 5-amino-1-(5-phospho-D-ribosyl)imidazole from N(2)-formyl-N(1)-(5-phospho-D-ribosyl)glycinamide: step 1/2.</text>
</comment>
<comment type="subunit">
    <text evidence="1">Monomer. Part of the FGAM synthase complex composed of 1 PurL, 1 PurQ and 2 PurS subunits.</text>
</comment>
<comment type="subcellular location">
    <subcellularLocation>
        <location evidence="1">Cytoplasm</location>
    </subcellularLocation>
</comment>
<comment type="similarity">
    <text evidence="1">Belongs to the FGAMS family.</text>
</comment>
<keyword id="KW-0067">ATP-binding</keyword>
<keyword id="KW-0963">Cytoplasm</keyword>
<keyword id="KW-0436">Ligase</keyword>
<keyword id="KW-0460">Magnesium</keyword>
<keyword id="KW-0479">Metal-binding</keyword>
<keyword id="KW-0547">Nucleotide-binding</keyword>
<keyword id="KW-0658">Purine biosynthesis</keyword>
<keyword id="KW-1185">Reference proteome</keyword>
<sequence length="736" mass="78408">MKNEPKITPELVAAHGLKPDEYERILKLIGREPTFTELGIFSAMWNEHCSYKSSRIHLRGLPTKAPWVIQGPGENAGVIDIGDGQAVVFKMESHNHPSYIEPYQGATTGVGGILRDVFTMGARPIACLNALSFGAPEHAKTRHLVSGVVAGVGGYGNSFGVPTVGGQVRFHTRYDGNILVNAMAVGLADADKIFYAAASGVNMPIVYLGSKTGRDGIHGASMASAEFDDKSEEKRPTVQVGDPFAEKLLLEACLEIMEKGCVIAIQDMGAAGLTCSAVEMGAKGDLGVDLDLDAVPTRETGMSAYEMMLSESQERMLMVLKPEKEKEAEAIFKKWGLDFAVVGYTTPSKRFVVKHGGDVMADLPIKELGDEAPLYDRPHVPSAALPVVHAREVMAPMGVGSALEKLIGTPDMCSKRWVWEQYDHVILGNTMQRPGGDAAVVRVQDGPKGLALTVDVTPRYCEADPFEGGKQAVAEAWRNITAVGGKPLAITDNLNFGNPERPEIMGQFVGCLKGISEACRTLDFPVVSGNVSLYNETNGRAILPTPSIGGVGLLDDFTKSASLAFKAEGEAILLIGETHGWLGQSVYLRDICGREEGAPPPVDLAAEKRNGDCVRGMIHAGTATAVHDLSDGGLLIALAEMAMASGIGAKLLAAPTSLVSQAYWFGEDQARYLVTVPETEAGRVLAKMRGCEVPCVRIGTTGGDAIAIAGEAPVTIDKLRTSFERWLPEYMGGKAA</sequence>
<proteinExistence type="inferred from homology"/>
<organism>
    <name type="scientific">Bradyrhizobium diazoefficiens (strain JCM 10833 / BCRC 13528 / IAM 13628 / NBRC 14792 / USDA 110)</name>
    <dbReference type="NCBI Taxonomy" id="224911"/>
    <lineage>
        <taxon>Bacteria</taxon>
        <taxon>Pseudomonadati</taxon>
        <taxon>Pseudomonadota</taxon>
        <taxon>Alphaproteobacteria</taxon>
        <taxon>Hyphomicrobiales</taxon>
        <taxon>Nitrobacteraceae</taxon>
        <taxon>Bradyrhizobium</taxon>
    </lineage>
</organism>
<protein>
    <recommendedName>
        <fullName evidence="1">Phosphoribosylformylglycinamidine synthase subunit PurL</fullName>
        <shortName evidence="1">FGAM synthase</shortName>
        <ecNumber evidence="1">6.3.5.3</ecNumber>
    </recommendedName>
    <alternativeName>
        <fullName evidence="1">Formylglycinamide ribonucleotide amidotransferase subunit II</fullName>
        <shortName evidence="1">FGAR amidotransferase II</shortName>
        <shortName evidence="1">FGAR-AT II</shortName>
    </alternativeName>
    <alternativeName>
        <fullName evidence="1">Glutamine amidotransferase PurL</fullName>
    </alternativeName>
    <alternativeName>
        <fullName evidence="1">Phosphoribosylformylglycinamidine synthase subunit II</fullName>
    </alternativeName>
</protein>
<accession>Q89IC0</accession>
<gene>
    <name evidence="1" type="primary">purL</name>
    <name type="ordered locus">bll5719</name>
</gene>
<name>PURL_BRADU</name>
<dbReference type="EC" id="6.3.5.3" evidence="1"/>
<dbReference type="EMBL" id="BA000040">
    <property type="protein sequence ID" value="BAC50984.1"/>
    <property type="molecule type" value="Genomic_DNA"/>
</dbReference>
<dbReference type="RefSeq" id="NP_772359.1">
    <property type="nucleotide sequence ID" value="NC_004463.1"/>
</dbReference>
<dbReference type="RefSeq" id="WP_011088464.1">
    <property type="nucleotide sequence ID" value="NC_004463.1"/>
</dbReference>
<dbReference type="SMR" id="Q89IC0"/>
<dbReference type="FunCoup" id="Q89IC0">
    <property type="interactions" value="672"/>
</dbReference>
<dbReference type="STRING" id="224911.AAV28_26110"/>
<dbReference type="EnsemblBacteria" id="BAC50984">
    <property type="protein sequence ID" value="BAC50984"/>
    <property type="gene ID" value="BAC50984"/>
</dbReference>
<dbReference type="GeneID" id="46492722"/>
<dbReference type="KEGG" id="bja:bll5719"/>
<dbReference type="PATRIC" id="fig|224911.44.peg.5650"/>
<dbReference type="eggNOG" id="COG0046">
    <property type="taxonomic scope" value="Bacteria"/>
</dbReference>
<dbReference type="HOGENOM" id="CLU_003100_0_1_5"/>
<dbReference type="InParanoid" id="Q89IC0"/>
<dbReference type="OrthoDB" id="9804441at2"/>
<dbReference type="PhylomeDB" id="Q89IC0"/>
<dbReference type="UniPathway" id="UPA00074">
    <property type="reaction ID" value="UER00128"/>
</dbReference>
<dbReference type="Proteomes" id="UP000002526">
    <property type="component" value="Chromosome"/>
</dbReference>
<dbReference type="GO" id="GO:0005737">
    <property type="term" value="C:cytoplasm"/>
    <property type="evidence" value="ECO:0007669"/>
    <property type="project" value="UniProtKB-SubCell"/>
</dbReference>
<dbReference type="GO" id="GO:0005524">
    <property type="term" value="F:ATP binding"/>
    <property type="evidence" value="ECO:0007669"/>
    <property type="project" value="UniProtKB-UniRule"/>
</dbReference>
<dbReference type="GO" id="GO:0000287">
    <property type="term" value="F:magnesium ion binding"/>
    <property type="evidence" value="ECO:0007669"/>
    <property type="project" value="UniProtKB-UniRule"/>
</dbReference>
<dbReference type="GO" id="GO:0004642">
    <property type="term" value="F:phosphoribosylformylglycinamidine synthase activity"/>
    <property type="evidence" value="ECO:0000318"/>
    <property type="project" value="GO_Central"/>
</dbReference>
<dbReference type="GO" id="GO:0006189">
    <property type="term" value="P:'de novo' IMP biosynthetic process"/>
    <property type="evidence" value="ECO:0007669"/>
    <property type="project" value="UniProtKB-UniRule"/>
</dbReference>
<dbReference type="GO" id="GO:0006164">
    <property type="term" value="P:purine nucleotide biosynthetic process"/>
    <property type="evidence" value="ECO:0000318"/>
    <property type="project" value="GO_Central"/>
</dbReference>
<dbReference type="CDD" id="cd02203">
    <property type="entry name" value="PurL_repeat1"/>
    <property type="match status" value="1"/>
</dbReference>
<dbReference type="CDD" id="cd02204">
    <property type="entry name" value="PurL_repeat2"/>
    <property type="match status" value="1"/>
</dbReference>
<dbReference type="FunFam" id="3.30.1330.10:FF:000004">
    <property type="entry name" value="Phosphoribosylformylglycinamidine synthase subunit PurL"/>
    <property type="match status" value="1"/>
</dbReference>
<dbReference type="Gene3D" id="3.90.650.10">
    <property type="entry name" value="PurM-like C-terminal domain"/>
    <property type="match status" value="2"/>
</dbReference>
<dbReference type="Gene3D" id="3.30.1330.10">
    <property type="entry name" value="PurM-like, N-terminal domain"/>
    <property type="match status" value="2"/>
</dbReference>
<dbReference type="HAMAP" id="MF_00420">
    <property type="entry name" value="PurL_2"/>
    <property type="match status" value="1"/>
</dbReference>
<dbReference type="InterPro" id="IPR010074">
    <property type="entry name" value="PRibForGlyAmidine_synth_PurL"/>
</dbReference>
<dbReference type="InterPro" id="IPR041609">
    <property type="entry name" value="PurL_linker"/>
</dbReference>
<dbReference type="InterPro" id="IPR010918">
    <property type="entry name" value="PurM-like_C_dom"/>
</dbReference>
<dbReference type="InterPro" id="IPR036676">
    <property type="entry name" value="PurM-like_C_sf"/>
</dbReference>
<dbReference type="InterPro" id="IPR016188">
    <property type="entry name" value="PurM-like_N"/>
</dbReference>
<dbReference type="InterPro" id="IPR036921">
    <property type="entry name" value="PurM-like_N_sf"/>
</dbReference>
<dbReference type="NCBIfam" id="TIGR01736">
    <property type="entry name" value="FGAM_synth_II"/>
    <property type="match status" value="1"/>
</dbReference>
<dbReference type="NCBIfam" id="NF002290">
    <property type="entry name" value="PRK01213.1"/>
    <property type="match status" value="1"/>
</dbReference>
<dbReference type="PANTHER" id="PTHR43555">
    <property type="entry name" value="PHOSPHORIBOSYLFORMYLGLYCINAMIDINE SYNTHASE SUBUNIT PURL"/>
    <property type="match status" value="1"/>
</dbReference>
<dbReference type="PANTHER" id="PTHR43555:SF1">
    <property type="entry name" value="PHOSPHORIBOSYLFORMYLGLYCINAMIDINE SYNTHASE SUBUNIT PURL"/>
    <property type="match status" value="1"/>
</dbReference>
<dbReference type="Pfam" id="PF00586">
    <property type="entry name" value="AIRS"/>
    <property type="match status" value="2"/>
</dbReference>
<dbReference type="Pfam" id="PF02769">
    <property type="entry name" value="AIRS_C"/>
    <property type="match status" value="2"/>
</dbReference>
<dbReference type="Pfam" id="PF18072">
    <property type="entry name" value="FGAR-AT_linker"/>
    <property type="match status" value="1"/>
</dbReference>
<dbReference type="PIRSF" id="PIRSF001587">
    <property type="entry name" value="FGAM_synthase_II"/>
    <property type="match status" value="1"/>
</dbReference>
<dbReference type="SUPFAM" id="SSF56042">
    <property type="entry name" value="PurM C-terminal domain-like"/>
    <property type="match status" value="2"/>
</dbReference>
<dbReference type="SUPFAM" id="SSF55326">
    <property type="entry name" value="PurM N-terminal domain-like"/>
    <property type="match status" value="2"/>
</dbReference>
<feature type="chain" id="PRO_0000100443" description="Phosphoribosylformylglycinamidine synthase subunit PurL">
    <location>
        <begin position="1"/>
        <end position="736"/>
    </location>
</feature>
<feature type="active site" evidence="1">
    <location>
        <position position="48"/>
    </location>
</feature>
<feature type="active site" description="Proton acceptor" evidence="1">
    <location>
        <position position="94"/>
    </location>
</feature>
<feature type="binding site" evidence="1">
    <location>
        <position position="51"/>
    </location>
    <ligand>
        <name>ATP</name>
        <dbReference type="ChEBI" id="CHEBI:30616"/>
    </ligand>
</feature>
<feature type="binding site" evidence="1">
    <location>
        <position position="90"/>
    </location>
    <ligand>
        <name>ATP</name>
        <dbReference type="ChEBI" id="CHEBI:30616"/>
    </ligand>
</feature>
<feature type="binding site" evidence="1">
    <location>
        <position position="92"/>
    </location>
    <ligand>
        <name>Mg(2+)</name>
        <dbReference type="ChEBI" id="CHEBI:18420"/>
        <label>1</label>
    </ligand>
</feature>
<feature type="binding site" evidence="1">
    <location>
        <begin position="93"/>
        <end position="96"/>
    </location>
    <ligand>
        <name>substrate</name>
    </ligand>
</feature>
<feature type="binding site" evidence="1">
    <location>
        <position position="115"/>
    </location>
    <ligand>
        <name>substrate</name>
    </ligand>
</feature>
<feature type="binding site" evidence="1">
    <location>
        <position position="116"/>
    </location>
    <ligand>
        <name>Mg(2+)</name>
        <dbReference type="ChEBI" id="CHEBI:18420"/>
        <label>2</label>
    </ligand>
</feature>
<feature type="binding site" evidence="1">
    <location>
        <position position="239"/>
    </location>
    <ligand>
        <name>substrate</name>
    </ligand>
</feature>
<feature type="binding site" evidence="1">
    <location>
        <position position="267"/>
    </location>
    <ligand>
        <name>Mg(2+)</name>
        <dbReference type="ChEBI" id="CHEBI:18420"/>
        <label>2</label>
    </ligand>
</feature>
<feature type="binding site" evidence="1">
    <location>
        <begin position="311"/>
        <end position="313"/>
    </location>
    <ligand>
        <name>substrate</name>
    </ligand>
</feature>
<feature type="binding site" evidence="1">
    <location>
        <position position="492"/>
    </location>
    <ligand>
        <name>ATP</name>
        <dbReference type="ChEBI" id="CHEBI:30616"/>
    </ligand>
</feature>
<feature type="binding site" evidence="1">
    <location>
        <position position="529"/>
    </location>
    <ligand>
        <name>ATP</name>
        <dbReference type="ChEBI" id="CHEBI:30616"/>
    </ligand>
</feature>
<feature type="binding site" evidence="1">
    <location>
        <position position="530"/>
    </location>
    <ligand>
        <name>Mg(2+)</name>
        <dbReference type="ChEBI" id="CHEBI:18420"/>
        <label>1</label>
    </ligand>
</feature>
<feature type="binding site" evidence="1">
    <location>
        <position position="532"/>
    </location>
    <ligand>
        <name>substrate</name>
    </ligand>
</feature>